<comment type="catalytic activity">
    <reaction evidence="1">
        <text>1-(5-phospho-beta-D-ribosyl)-5-[(5-phospho-beta-D-ribosylamino)methylideneamino]imidazole-4-carboxamide = 5-[(5-phospho-1-deoxy-D-ribulos-1-ylimino)methylamino]-1-(5-phospho-beta-D-ribosyl)imidazole-4-carboxamide</text>
        <dbReference type="Rhea" id="RHEA:15469"/>
        <dbReference type="ChEBI" id="CHEBI:58435"/>
        <dbReference type="ChEBI" id="CHEBI:58525"/>
        <dbReference type="EC" id="5.3.1.16"/>
    </reaction>
</comment>
<comment type="pathway">
    <text evidence="1">Amino-acid biosynthesis; L-histidine biosynthesis; L-histidine from 5-phospho-alpha-D-ribose 1-diphosphate: step 4/9.</text>
</comment>
<comment type="subcellular location">
    <subcellularLocation>
        <location evidence="1">Cytoplasm</location>
    </subcellularLocation>
</comment>
<comment type="similarity">
    <text evidence="1">Belongs to the HisA/HisF family.</text>
</comment>
<organism>
    <name type="scientific">Bacteroides fragilis (strain ATCC 25285 / DSM 2151 / CCUG 4856 / JCM 11019 / LMG 10263 / NCTC 9343 / Onslow / VPI 2553 / EN-2)</name>
    <dbReference type="NCBI Taxonomy" id="272559"/>
    <lineage>
        <taxon>Bacteria</taxon>
        <taxon>Pseudomonadati</taxon>
        <taxon>Bacteroidota</taxon>
        <taxon>Bacteroidia</taxon>
        <taxon>Bacteroidales</taxon>
        <taxon>Bacteroidaceae</taxon>
        <taxon>Bacteroides</taxon>
    </lineage>
</organism>
<sequence length="239" mass="26133">MIELIPAIDIIDGKCVRLSQGDYGSKKVYNENPVEVAKEFEANGIRRLHVVDLDGAASHHVVNYRTLDLISSRTSLIIDFGGGLKSDEDLIIAFENGAQMVTGGSIAVRNPDLFCRWIDRYGSGKIILGADVKDRRIAVNGWKDESTCELFPFLKDYTQKGIEKVICTDISCDGMLAGPSLDLYKEILAEHPTLYLIASGGVSSIADIEALHEAGVPAVIFGKALYEGRITLKELQAFL</sequence>
<protein>
    <recommendedName>
        <fullName evidence="1">1-(5-phosphoribosyl)-5-[(5-phosphoribosylamino)methylideneamino] imidazole-4-carboxamide isomerase</fullName>
        <ecNumber evidence="1">5.3.1.16</ecNumber>
    </recommendedName>
    <alternativeName>
        <fullName evidence="1">Phosphoribosylformimino-5-aminoimidazole carboxamide ribotide isomerase</fullName>
    </alternativeName>
</protein>
<evidence type="ECO:0000255" key="1">
    <source>
        <dbReference type="HAMAP-Rule" id="MF_01014"/>
    </source>
</evidence>
<name>HIS4_BACFN</name>
<dbReference type="EC" id="5.3.1.16" evidence="1"/>
<dbReference type="EMBL" id="CR626927">
    <property type="protein sequence ID" value="CAH08584.1"/>
    <property type="molecule type" value="Genomic_DNA"/>
</dbReference>
<dbReference type="RefSeq" id="WP_010993171.1">
    <property type="nucleotide sequence ID" value="NC_003228.3"/>
</dbReference>
<dbReference type="SMR" id="Q5LBD6"/>
<dbReference type="PaxDb" id="272559-BF9343_2803"/>
<dbReference type="GeneID" id="60369673"/>
<dbReference type="KEGG" id="bfs:BF9343_2803"/>
<dbReference type="eggNOG" id="COG0106">
    <property type="taxonomic scope" value="Bacteria"/>
</dbReference>
<dbReference type="HOGENOM" id="CLU_048577_1_2_10"/>
<dbReference type="UniPathway" id="UPA00031">
    <property type="reaction ID" value="UER00009"/>
</dbReference>
<dbReference type="Proteomes" id="UP000006731">
    <property type="component" value="Chromosome"/>
</dbReference>
<dbReference type="GO" id="GO:0005737">
    <property type="term" value="C:cytoplasm"/>
    <property type="evidence" value="ECO:0007669"/>
    <property type="project" value="UniProtKB-SubCell"/>
</dbReference>
<dbReference type="GO" id="GO:0003949">
    <property type="term" value="F:1-(5-phosphoribosyl)-5-[(5-phosphoribosylamino)methylideneamino]imidazole-4-carboxamide isomerase activity"/>
    <property type="evidence" value="ECO:0007669"/>
    <property type="project" value="UniProtKB-UniRule"/>
</dbReference>
<dbReference type="GO" id="GO:0000105">
    <property type="term" value="P:L-histidine biosynthetic process"/>
    <property type="evidence" value="ECO:0007669"/>
    <property type="project" value="UniProtKB-UniRule"/>
</dbReference>
<dbReference type="GO" id="GO:0000162">
    <property type="term" value="P:L-tryptophan biosynthetic process"/>
    <property type="evidence" value="ECO:0007669"/>
    <property type="project" value="TreeGrafter"/>
</dbReference>
<dbReference type="CDD" id="cd04732">
    <property type="entry name" value="HisA"/>
    <property type="match status" value="1"/>
</dbReference>
<dbReference type="FunFam" id="3.20.20.70:FF:000009">
    <property type="entry name" value="1-(5-phosphoribosyl)-5-[(5-phosphoribosylamino)methylideneamino] imidazole-4-carboxamide isomerase"/>
    <property type="match status" value="1"/>
</dbReference>
<dbReference type="Gene3D" id="3.20.20.70">
    <property type="entry name" value="Aldolase class I"/>
    <property type="match status" value="1"/>
</dbReference>
<dbReference type="HAMAP" id="MF_01014">
    <property type="entry name" value="HisA"/>
    <property type="match status" value="1"/>
</dbReference>
<dbReference type="InterPro" id="IPR013785">
    <property type="entry name" value="Aldolase_TIM"/>
</dbReference>
<dbReference type="InterPro" id="IPR006062">
    <property type="entry name" value="His_biosynth"/>
</dbReference>
<dbReference type="InterPro" id="IPR006063">
    <property type="entry name" value="HisA_bact_arch"/>
</dbReference>
<dbReference type="InterPro" id="IPR044524">
    <property type="entry name" value="Isoase_HisA-like"/>
</dbReference>
<dbReference type="InterPro" id="IPR023016">
    <property type="entry name" value="Isoase_HisA-like_bact"/>
</dbReference>
<dbReference type="InterPro" id="IPR011060">
    <property type="entry name" value="RibuloseP-bd_barrel"/>
</dbReference>
<dbReference type="NCBIfam" id="TIGR00007">
    <property type="entry name" value="1-(5-phosphoribosyl)-5-[(5-phosphoribosylamino)methylideneamino]imidazole-4-carboxamide isomerase"/>
    <property type="match status" value="1"/>
</dbReference>
<dbReference type="PANTHER" id="PTHR43090">
    <property type="entry name" value="1-(5-PHOSPHORIBOSYL)-5-[(5-PHOSPHORIBOSYLAMINO)METHYLIDENEAMINO] IMIDAZOLE-4-CARBOXAMIDE ISOMERASE"/>
    <property type="match status" value="1"/>
</dbReference>
<dbReference type="PANTHER" id="PTHR43090:SF2">
    <property type="entry name" value="1-(5-PHOSPHORIBOSYL)-5-[(5-PHOSPHORIBOSYLAMINO)METHYLIDENEAMINO] IMIDAZOLE-4-CARBOXAMIDE ISOMERASE"/>
    <property type="match status" value="1"/>
</dbReference>
<dbReference type="Pfam" id="PF00977">
    <property type="entry name" value="His_biosynth"/>
    <property type="match status" value="1"/>
</dbReference>
<dbReference type="SUPFAM" id="SSF51366">
    <property type="entry name" value="Ribulose-phoshate binding barrel"/>
    <property type="match status" value="1"/>
</dbReference>
<keyword id="KW-0028">Amino-acid biosynthesis</keyword>
<keyword id="KW-0963">Cytoplasm</keyword>
<keyword id="KW-0368">Histidine biosynthesis</keyword>
<keyword id="KW-0413">Isomerase</keyword>
<reference key="1">
    <citation type="journal article" date="2005" name="Science">
        <title>Extensive DNA inversions in the B. fragilis genome control variable gene expression.</title>
        <authorList>
            <person name="Cerdeno-Tarraga A.-M."/>
            <person name="Patrick S."/>
            <person name="Crossman L.C."/>
            <person name="Blakely G."/>
            <person name="Abratt V."/>
            <person name="Lennard N."/>
            <person name="Poxton I."/>
            <person name="Duerden B."/>
            <person name="Harris B."/>
            <person name="Quail M.A."/>
            <person name="Barron A."/>
            <person name="Clark L."/>
            <person name="Corton C."/>
            <person name="Doggett J."/>
            <person name="Holden M.T.G."/>
            <person name="Larke N."/>
            <person name="Line A."/>
            <person name="Lord A."/>
            <person name="Norbertczak H."/>
            <person name="Ormond D."/>
            <person name="Price C."/>
            <person name="Rabbinowitsch E."/>
            <person name="Woodward J."/>
            <person name="Barrell B.G."/>
            <person name="Parkhill J."/>
        </authorList>
    </citation>
    <scope>NUCLEOTIDE SEQUENCE [LARGE SCALE GENOMIC DNA]</scope>
    <source>
        <strain>ATCC 25285 / DSM 2151 / CCUG 4856 / JCM 11019 / LMG 10263 / NCTC 9343 / Onslow / VPI 2553 / EN-2</strain>
    </source>
</reference>
<proteinExistence type="inferred from homology"/>
<gene>
    <name evidence="1" type="primary">hisA</name>
    <name type="ordered locus">BF2890</name>
</gene>
<feature type="chain" id="PRO_0000229042" description="1-(5-phosphoribosyl)-5-[(5-phosphoribosylamino)methylideneamino] imidazole-4-carboxamide isomerase">
    <location>
        <begin position="1"/>
        <end position="239"/>
    </location>
</feature>
<feature type="active site" description="Proton acceptor" evidence="1">
    <location>
        <position position="9"/>
    </location>
</feature>
<feature type="active site" description="Proton donor" evidence="1">
    <location>
        <position position="131"/>
    </location>
</feature>
<accession>Q5LBD6</accession>